<accession>Q9SXE9</accession>
<accession>C0Z2B3</accession>
<accession>Q8LBZ8</accession>
<feature type="chain" id="PRO_0000458762" description="Cytosolic calcium-binding protein 1">
    <location>
        <begin position="1"/>
        <end position="152"/>
    </location>
</feature>
<feature type="repeat" description="1" evidence="4">
    <location>
        <begin position="57"/>
        <end position="62"/>
    </location>
</feature>
<feature type="repeat" description="2" evidence="4">
    <location>
        <begin position="67"/>
        <end position="71"/>
    </location>
</feature>
<feature type="repeat" description="3" evidence="4">
    <location>
        <begin position="78"/>
        <end position="82"/>
    </location>
</feature>
<feature type="repeat" description="4" evidence="4">
    <location>
        <begin position="104"/>
        <end position="108"/>
    </location>
</feature>
<feature type="repeat" description="5" evidence="4">
    <location>
        <begin position="112"/>
        <end position="116"/>
    </location>
</feature>
<feature type="repeat" description="6" evidence="4">
    <location>
        <begin position="124"/>
        <end position="129"/>
    </location>
</feature>
<feature type="repeat" description="7" evidence="4">
    <location>
        <begin position="131"/>
        <end position="136"/>
    </location>
</feature>
<feature type="region of interest" description="7 X 5 AA approximate repeats of V-E-E-K-K" evidence="4">
    <location>
        <begin position="57"/>
        <end position="136"/>
    </location>
</feature>
<feature type="region of interest" description="Disordered" evidence="1">
    <location>
        <begin position="60"/>
        <end position="152"/>
    </location>
</feature>
<feature type="compositionally biased region" description="Basic and acidic residues" evidence="1">
    <location>
        <begin position="96"/>
        <end position="138"/>
    </location>
</feature>
<feature type="splice variant" id="VSP_061965" description="In isoform 2.">
    <original>ETEEAQVETPEVVEIKKDEEAPVETPVVVEDESKTEEVVEAKKEEEVEEKKT</original>
    <variation>QNRGSCRGEERGRSRRKEDRGSSSGCGGREEARGRGGETRRGSLRDSSSGEG</variation>
    <location>
        <begin position="66"/>
        <end position="117"/>
    </location>
</feature>
<feature type="splice variant" id="VSP_061966" description="In isoform 2.">
    <location>
        <begin position="118"/>
        <end position="152"/>
    </location>
</feature>
<feature type="sequence conflict" description="In Ref. 5; AAM63945." evidence="4" ref="5">
    <original>I</original>
    <variation>V</variation>
    <location>
        <position position="4"/>
    </location>
</feature>
<gene>
    <name evidence="3" type="primary">CCaP1</name>
    <name evidence="5" type="ordered locus">At1g62480</name>
    <name evidence="6" type="ORF">T3P18.4</name>
</gene>
<name>CCAP1_ARATH</name>
<protein>
    <recommendedName>
        <fullName evidence="3">Cytosolic calcium-binding protein 1</fullName>
        <shortName evidence="3">Cytosolic Ca(2+)-binding protein 1</shortName>
    </recommendedName>
</protein>
<proteinExistence type="evidence at protein level"/>
<comment type="function">
    <text evidence="2">Binds calcium Ca(2+) and may act as a signal mediator to buffer Ca(2+).</text>
</comment>
<comment type="subcellular location">
    <subcellularLocation>
        <location evidence="2">Cytoplasm</location>
        <location evidence="2">Cytosol</location>
    </subcellularLocation>
</comment>
<comment type="alternative products">
    <event type="alternative splicing"/>
    <isoform>
        <id>Q9SXE9-1</id>
        <name>1</name>
        <sequence type="displayed"/>
    </isoform>
    <isoform>
        <id>Q9SXE9-2</id>
        <name>2</name>
        <sequence type="described" ref="VSP_061965 VSP_061966"/>
    </isoform>
</comment>
<comment type="tissue specificity">
    <text evidence="2">Predominantly expressed in petioles (at protein level) (PubMed:17145720). Mainly observed in shoots, flowers, siliques and roots, and, to a lower extent, in stems and leaves (PubMed:17145720).</text>
</comment>
<comment type="induction">
    <text evidence="2">Levels follow a circadian cycle with higher levels during the night and lower levels in light phases (PubMed:17145720). Accumulates in darkness within 24 hours, but repressed by light and the product of photosynthesis (e.g. sucrose) (at protein level) (PubMed:17145720). Induced by sucrose depletion, but activated by mannitol and sorbitol (PubMed:17145720). Triggered by gibberellic acid (GA) and salt stresses (e.g. NaCl and KCl) (PubMed:17145720). Suppressed by a high concentration of calcium Ca(2+) and of other metal ions (PubMed:17145720).</text>
</comment>
<reference key="1">
    <citation type="journal article" date="2000" name="Nature">
        <title>Sequence and analysis of chromosome 1 of the plant Arabidopsis thaliana.</title>
        <authorList>
            <person name="Theologis A."/>
            <person name="Ecker J.R."/>
            <person name="Palm C.J."/>
            <person name="Federspiel N.A."/>
            <person name="Kaul S."/>
            <person name="White O."/>
            <person name="Alonso J."/>
            <person name="Altafi H."/>
            <person name="Araujo R."/>
            <person name="Bowman C.L."/>
            <person name="Brooks S.Y."/>
            <person name="Buehler E."/>
            <person name="Chan A."/>
            <person name="Chao Q."/>
            <person name="Chen H."/>
            <person name="Cheuk R.F."/>
            <person name="Chin C.W."/>
            <person name="Chung M.K."/>
            <person name="Conn L."/>
            <person name="Conway A.B."/>
            <person name="Conway A.R."/>
            <person name="Creasy T.H."/>
            <person name="Dewar K."/>
            <person name="Dunn P."/>
            <person name="Etgu P."/>
            <person name="Feldblyum T.V."/>
            <person name="Feng J.-D."/>
            <person name="Fong B."/>
            <person name="Fujii C.Y."/>
            <person name="Gill J.E."/>
            <person name="Goldsmith A.D."/>
            <person name="Haas B."/>
            <person name="Hansen N.F."/>
            <person name="Hughes B."/>
            <person name="Huizar L."/>
            <person name="Hunter J.L."/>
            <person name="Jenkins J."/>
            <person name="Johnson-Hopson C."/>
            <person name="Khan S."/>
            <person name="Khaykin E."/>
            <person name="Kim C.J."/>
            <person name="Koo H.L."/>
            <person name="Kremenetskaia I."/>
            <person name="Kurtz D.B."/>
            <person name="Kwan A."/>
            <person name="Lam B."/>
            <person name="Langin-Hooper S."/>
            <person name="Lee A."/>
            <person name="Lee J.M."/>
            <person name="Lenz C.A."/>
            <person name="Li J.H."/>
            <person name="Li Y.-P."/>
            <person name="Lin X."/>
            <person name="Liu S.X."/>
            <person name="Liu Z.A."/>
            <person name="Luros J.S."/>
            <person name="Maiti R."/>
            <person name="Marziali A."/>
            <person name="Militscher J."/>
            <person name="Miranda M."/>
            <person name="Nguyen M."/>
            <person name="Nierman W.C."/>
            <person name="Osborne B.I."/>
            <person name="Pai G."/>
            <person name="Peterson J."/>
            <person name="Pham P.K."/>
            <person name="Rizzo M."/>
            <person name="Rooney T."/>
            <person name="Rowley D."/>
            <person name="Sakano H."/>
            <person name="Salzberg S.L."/>
            <person name="Schwartz J.R."/>
            <person name="Shinn P."/>
            <person name="Southwick A.M."/>
            <person name="Sun H."/>
            <person name="Tallon L.J."/>
            <person name="Tambunga G."/>
            <person name="Toriumi M.J."/>
            <person name="Town C.D."/>
            <person name="Utterback T."/>
            <person name="Van Aken S."/>
            <person name="Vaysberg M."/>
            <person name="Vysotskaia V.S."/>
            <person name="Walker M."/>
            <person name="Wu D."/>
            <person name="Yu G."/>
            <person name="Fraser C.M."/>
            <person name="Venter J.C."/>
            <person name="Davis R.W."/>
        </authorList>
    </citation>
    <scope>NUCLEOTIDE SEQUENCE [LARGE SCALE GENOMIC DNA]</scope>
    <source>
        <strain>cv. Columbia</strain>
    </source>
</reference>
<reference key="2">
    <citation type="journal article" date="2017" name="Plant J.">
        <title>Araport11: a complete reannotation of the Arabidopsis thaliana reference genome.</title>
        <authorList>
            <person name="Cheng C.Y."/>
            <person name="Krishnakumar V."/>
            <person name="Chan A.P."/>
            <person name="Thibaud-Nissen F."/>
            <person name="Schobel S."/>
            <person name="Town C.D."/>
        </authorList>
    </citation>
    <scope>GENOME REANNOTATION</scope>
    <source>
        <strain>cv. Columbia</strain>
    </source>
</reference>
<reference key="3">
    <citation type="journal article" date="2003" name="Science">
        <title>Empirical analysis of transcriptional activity in the Arabidopsis genome.</title>
        <authorList>
            <person name="Yamada K."/>
            <person name="Lim J."/>
            <person name="Dale J.M."/>
            <person name="Chen H."/>
            <person name="Shinn P."/>
            <person name="Palm C.J."/>
            <person name="Southwick A.M."/>
            <person name="Wu H.C."/>
            <person name="Kim C.J."/>
            <person name="Nguyen M."/>
            <person name="Pham P.K."/>
            <person name="Cheuk R.F."/>
            <person name="Karlin-Newmann G."/>
            <person name="Liu S.X."/>
            <person name="Lam B."/>
            <person name="Sakano H."/>
            <person name="Wu T."/>
            <person name="Yu G."/>
            <person name="Miranda M."/>
            <person name="Quach H.L."/>
            <person name="Tripp M."/>
            <person name="Chang C.H."/>
            <person name="Lee J.M."/>
            <person name="Toriumi M.J."/>
            <person name="Chan M.M."/>
            <person name="Tang C.C."/>
            <person name="Onodera C.S."/>
            <person name="Deng J.M."/>
            <person name="Akiyama K."/>
            <person name="Ansari Y."/>
            <person name="Arakawa T."/>
            <person name="Banh J."/>
            <person name="Banno F."/>
            <person name="Bowser L."/>
            <person name="Brooks S.Y."/>
            <person name="Carninci P."/>
            <person name="Chao Q."/>
            <person name="Choy N."/>
            <person name="Enju A."/>
            <person name="Goldsmith A.D."/>
            <person name="Gurjal M."/>
            <person name="Hansen N.F."/>
            <person name="Hayashizaki Y."/>
            <person name="Johnson-Hopson C."/>
            <person name="Hsuan V.W."/>
            <person name="Iida K."/>
            <person name="Karnes M."/>
            <person name="Khan S."/>
            <person name="Koesema E."/>
            <person name="Ishida J."/>
            <person name="Jiang P.X."/>
            <person name="Jones T."/>
            <person name="Kawai J."/>
            <person name="Kamiya A."/>
            <person name="Meyers C."/>
            <person name="Nakajima M."/>
            <person name="Narusaka M."/>
            <person name="Seki M."/>
            <person name="Sakurai T."/>
            <person name="Satou M."/>
            <person name="Tamse R."/>
            <person name="Vaysberg M."/>
            <person name="Wallender E.K."/>
            <person name="Wong C."/>
            <person name="Yamamura Y."/>
            <person name="Yuan S."/>
            <person name="Shinozaki K."/>
            <person name="Davis R.W."/>
            <person name="Theologis A."/>
            <person name="Ecker J.R."/>
        </authorList>
    </citation>
    <scope>NUCLEOTIDE SEQUENCE [LARGE SCALE MRNA] (ISOFORM 1)</scope>
    <source>
        <strain>cv. Columbia</strain>
    </source>
</reference>
<reference key="4">
    <citation type="journal article" date="2009" name="DNA Res.">
        <title>Analysis of multiple occurrences of alternative splicing events in Arabidopsis thaliana using novel sequenced full-length cDNAs.</title>
        <authorList>
            <person name="Iida K."/>
            <person name="Fukami-Kobayashi K."/>
            <person name="Toyoda A."/>
            <person name="Sakaki Y."/>
            <person name="Kobayashi M."/>
            <person name="Seki M."/>
            <person name="Shinozaki K."/>
        </authorList>
    </citation>
    <scope>NUCLEOTIDE SEQUENCE [LARGE SCALE MRNA] (ISOFORM 2)</scope>
    <source>
        <strain>cv. Columbia</strain>
        <tissue>Root</tissue>
    </source>
</reference>
<reference key="5">
    <citation type="submission" date="2002-03" db="EMBL/GenBank/DDBJ databases">
        <title>Full-length cDNA from Arabidopsis thaliana.</title>
        <authorList>
            <person name="Brover V.V."/>
            <person name="Troukhan M.E."/>
            <person name="Alexandrov N.A."/>
            <person name="Lu Y.-P."/>
            <person name="Flavell R.B."/>
            <person name="Feldmann K.A."/>
        </authorList>
    </citation>
    <scope>NUCLEOTIDE SEQUENCE [LARGE SCALE MRNA] (ISOFORM 1)</scope>
</reference>
<reference key="6">
    <citation type="journal article" date="2007" name="Plant Cell Physiol.">
        <title>Transcriptional induction of two genes for CCaPs, novel cytosolic proteins, in Arabidopsis thaliana in the dark.</title>
        <authorList>
            <person name="Ide Y."/>
            <person name="Tomioka R."/>
            <person name="Ouchi Y."/>
            <person name="Kamiya T."/>
            <person name="Maeshima M."/>
        </authorList>
    </citation>
    <scope>FUNCTION</scope>
    <scope>INDUCTION BY DARKNESS; SUGARS; METAL IONS AND SUCROSE DEPLETION</scope>
    <scope>SUBCELLULAR LOCATION</scope>
    <scope>TISSUE SPECIFICITY</scope>
</reference>
<reference key="7">
    <citation type="journal article" date="2009" name="Plant Physiol.">
        <title>Large-scale Arabidopsis phosphoproteome profiling reveals novel chloroplast kinase substrates and phosphorylation networks.</title>
        <authorList>
            <person name="Reiland S."/>
            <person name="Messerli G."/>
            <person name="Baerenfaller K."/>
            <person name="Gerrits B."/>
            <person name="Endler A."/>
            <person name="Grossmann J."/>
            <person name="Gruissem W."/>
            <person name="Baginsky S."/>
        </authorList>
    </citation>
    <scope>IDENTIFICATION BY MASS SPECTROMETRY [LARGE SCALE ANALYSIS]</scope>
</reference>
<reference key="8">
    <citation type="journal article" date="2012" name="Mol. Cell. Proteomics">
        <title>Comparative large-scale characterisation of plant vs. mammal proteins reveals similar and idiosyncratic N-alpha acetylation features.</title>
        <authorList>
            <person name="Bienvenut W.V."/>
            <person name="Sumpton D."/>
            <person name="Martinez A."/>
            <person name="Lilla S."/>
            <person name="Espagne C."/>
            <person name="Meinnel T."/>
            <person name="Giglione C."/>
        </authorList>
    </citation>
    <scope>IDENTIFICATION BY MASS SPECTROMETRY [LARGE SCALE ANALYSIS]</scope>
</reference>
<keyword id="KW-0938">Abscisic acid signaling pathway</keyword>
<keyword id="KW-0025">Alternative splicing</keyword>
<keyword id="KW-0106">Calcium</keyword>
<keyword id="KW-0963">Cytoplasm</keyword>
<keyword id="KW-1185">Reference proteome</keyword>
<keyword id="KW-0677">Repeat</keyword>
<evidence type="ECO:0000256" key="1">
    <source>
        <dbReference type="SAM" id="MobiDB-lite"/>
    </source>
</evidence>
<evidence type="ECO:0000269" key="2">
    <source>
    </source>
</evidence>
<evidence type="ECO:0000303" key="3">
    <source>
    </source>
</evidence>
<evidence type="ECO:0000305" key="4"/>
<evidence type="ECO:0000312" key="5">
    <source>
        <dbReference type="Araport" id="AT1G62480"/>
    </source>
</evidence>
<evidence type="ECO:0000312" key="6">
    <source>
        <dbReference type="EMBL" id="AAD43605.1"/>
    </source>
</evidence>
<organism>
    <name type="scientific">Arabidopsis thaliana</name>
    <name type="common">Mouse-ear cress</name>
    <dbReference type="NCBI Taxonomy" id="3702"/>
    <lineage>
        <taxon>Eukaryota</taxon>
        <taxon>Viridiplantae</taxon>
        <taxon>Streptophyta</taxon>
        <taxon>Embryophyta</taxon>
        <taxon>Tracheophyta</taxon>
        <taxon>Spermatophyta</taxon>
        <taxon>Magnoliopsida</taxon>
        <taxon>eudicotyledons</taxon>
        <taxon>Gunneridae</taxon>
        <taxon>Pentapetalae</taxon>
        <taxon>rosids</taxon>
        <taxon>malvids</taxon>
        <taxon>Brassicales</taxon>
        <taxon>Brassicaceae</taxon>
        <taxon>Camelineae</taxon>
        <taxon>Arabidopsis</taxon>
    </lineage>
</organism>
<dbReference type="EMBL" id="AC005698">
    <property type="protein sequence ID" value="AAD43605.1"/>
    <property type="molecule type" value="Genomic_DNA"/>
</dbReference>
<dbReference type="EMBL" id="CP002684">
    <property type="protein sequence ID" value="AEE33970.1"/>
    <property type="molecule type" value="Genomic_DNA"/>
</dbReference>
<dbReference type="EMBL" id="AY074862">
    <property type="protein sequence ID" value="AAL75884.1"/>
    <property type="molecule type" value="mRNA"/>
</dbReference>
<dbReference type="EMBL" id="AY097383">
    <property type="protein sequence ID" value="AAM19899.1"/>
    <property type="molecule type" value="mRNA"/>
</dbReference>
<dbReference type="EMBL" id="AK318727">
    <property type="protein sequence ID" value="BAH56842.1"/>
    <property type="molecule type" value="mRNA"/>
</dbReference>
<dbReference type="EMBL" id="AY086900">
    <property type="protein sequence ID" value="AAM63945.1"/>
    <property type="molecule type" value="mRNA"/>
</dbReference>
<dbReference type="RefSeq" id="NP_564795.1">
    <molecule id="Q9SXE9-1"/>
    <property type="nucleotide sequence ID" value="NM_104927.3"/>
</dbReference>
<dbReference type="STRING" id="3702.Q9SXE9"/>
<dbReference type="iPTMnet" id="Q9SXE9"/>
<dbReference type="PaxDb" id="3702-AT1G62480.1"/>
<dbReference type="ProMEX" id="Q9SXE9"/>
<dbReference type="ProteomicsDB" id="187655"/>
<dbReference type="EnsemblPlants" id="AT1G62480.1">
    <molecule id="Q9SXE9-1"/>
    <property type="protein sequence ID" value="AT1G62480.1"/>
    <property type="gene ID" value="AT1G62480"/>
</dbReference>
<dbReference type="GeneID" id="842545"/>
<dbReference type="Gramene" id="AT1G62480.1">
    <molecule id="Q9SXE9-1"/>
    <property type="protein sequence ID" value="AT1G62480.1"/>
    <property type="gene ID" value="AT1G62480"/>
</dbReference>
<dbReference type="KEGG" id="ath:AT1G62480"/>
<dbReference type="Araport" id="AT1G62480"/>
<dbReference type="TAIR" id="AT1G62480"/>
<dbReference type="HOGENOM" id="CLU_154106_0_0_1"/>
<dbReference type="OMA" id="EETCVEP"/>
<dbReference type="PRO" id="PR:Q9SXE9"/>
<dbReference type="Proteomes" id="UP000006548">
    <property type="component" value="Chromosome 1"/>
</dbReference>
<dbReference type="ExpressionAtlas" id="Q9SXE9">
    <property type="expression patterns" value="baseline and differential"/>
</dbReference>
<dbReference type="GO" id="GO:0005829">
    <property type="term" value="C:cytosol"/>
    <property type="evidence" value="ECO:0000314"/>
    <property type="project" value="UniProtKB"/>
</dbReference>
<dbReference type="GO" id="GO:0005634">
    <property type="term" value="C:nucleus"/>
    <property type="evidence" value="ECO:0007005"/>
    <property type="project" value="TAIR"/>
</dbReference>
<dbReference type="GO" id="GO:0005509">
    <property type="term" value="F:calcium ion binding"/>
    <property type="evidence" value="ECO:0000314"/>
    <property type="project" value="UniProtKB"/>
</dbReference>
<dbReference type="GO" id="GO:0009738">
    <property type="term" value="P:abscisic acid-activated signaling pathway"/>
    <property type="evidence" value="ECO:0007669"/>
    <property type="project" value="UniProtKB-KW"/>
</dbReference>
<dbReference type="GO" id="GO:0071370">
    <property type="term" value="P:cellular response to gibberellin stimulus"/>
    <property type="evidence" value="ECO:0000270"/>
    <property type="project" value="UniProtKB"/>
</dbReference>
<dbReference type="GO" id="GO:0043617">
    <property type="term" value="P:cellular response to sucrose starvation"/>
    <property type="evidence" value="ECO:0000270"/>
    <property type="project" value="UniProtKB"/>
</dbReference>
<dbReference type="GO" id="GO:0009646">
    <property type="term" value="P:response to absence of light"/>
    <property type="evidence" value="ECO:0000270"/>
    <property type="project" value="UniProtKB"/>
</dbReference>
<dbReference type="GO" id="GO:0051592">
    <property type="term" value="P:response to calcium ion"/>
    <property type="evidence" value="ECO:0000270"/>
    <property type="project" value="UniProtKB"/>
</dbReference>
<dbReference type="GO" id="GO:0009416">
    <property type="term" value="P:response to light stimulus"/>
    <property type="evidence" value="ECO:0000270"/>
    <property type="project" value="UniProtKB"/>
</dbReference>
<dbReference type="GO" id="GO:0010555">
    <property type="term" value="P:response to mannitol"/>
    <property type="evidence" value="ECO:0000270"/>
    <property type="project" value="UniProtKB"/>
</dbReference>
<dbReference type="GO" id="GO:0010038">
    <property type="term" value="P:response to metal ion"/>
    <property type="evidence" value="ECO:0000270"/>
    <property type="project" value="UniProtKB"/>
</dbReference>
<dbReference type="GO" id="GO:1902074">
    <property type="term" value="P:response to salt"/>
    <property type="evidence" value="ECO:0000270"/>
    <property type="project" value="UniProtKB"/>
</dbReference>
<dbReference type="GO" id="GO:0072708">
    <property type="term" value="P:response to sorbitol"/>
    <property type="evidence" value="ECO:0000270"/>
    <property type="project" value="UniProtKB"/>
</dbReference>
<dbReference type="GO" id="GO:0009744">
    <property type="term" value="P:response to sucrose"/>
    <property type="evidence" value="ECO:0000270"/>
    <property type="project" value="UniProtKB"/>
</dbReference>
<sequence length="152" mass="16628">MATIEVEQVTPVAAENIEVPPPKAVESEEVTTVSESLPAPVTESQAPVEVTTKDLVVEETEKPIEETEEAQVETPEVVEIKKDEEAPVETPVVVEDESKTEEVVEAKKEEEVEEKKTEEAPVVVEEEKKPEAEEEKPAVEASVTAPVEKADE</sequence>